<dbReference type="EC" id="2.6.1.9" evidence="1"/>
<dbReference type="EMBL" id="CU928145">
    <property type="protein sequence ID" value="CAU98153.1"/>
    <property type="molecule type" value="Genomic_DNA"/>
</dbReference>
<dbReference type="RefSeq" id="WP_000108967.1">
    <property type="nucleotide sequence ID" value="NZ_CP028304.1"/>
</dbReference>
<dbReference type="SMR" id="B7L9P8"/>
<dbReference type="KEGG" id="eck:EC55989_2280"/>
<dbReference type="HOGENOM" id="CLU_017584_3_1_6"/>
<dbReference type="UniPathway" id="UPA00031">
    <property type="reaction ID" value="UER00012"/>
</dbReference>
<dbReference type="Proteomes" id="UP000000746">
    <property type="component" value="Chromosome"/>
</dbReference>
<dbReference type="GO" id="GO:0004400">
    <property type="term" value="F:histidinol-phosphate transaminase activity"/>
    <property type="evidence" value="ECO:0007669"/>
    <property type="project" value="UniProtKB-UniRule"/>
</dbReference>
<dbReference type="GO" id="GO:0030170">
    <property type="term" value="F:pyridoxal phosphate binding"/>
    <property type="evidence" value="ECO:0007669"/>
    <property type="project" value="InterPro"/>
</dbReference>
<dbReference type="GO" id="GO:0000105">
    <property type="term" value="P:L-histidine biosynthetic process"/>
    <property type="evidence" value="ECO:0007669"/>
    <property type="project" value="UniProtKB-UniRule"/>
</dbReference>
<dbReference type="CDD" id="cd00609">
    <property type="entry name" value="AAT_like"/>
    <property type="match status" value="1"/>
</dbReference>
<dbReference type="FunFam" id="3.40.640.10:FF:000032">
    <property type="entry name" value="Histidinol-phosphate aminotransferase"/>
    <property type="match status" value="1"/>
</dbReference>
<dbReference type="FunFam" id="3.90.1150.10:FF:000042">
    <property type="entry name" value="Histidinol-phosphate aminotransferase"/>
    <property type="match status" value="1"/>
</dbReference>
<dbReference type="Gene3D" id="3.90.1150.10">
    <property type="entry name" value="Aspartate Aminotransferase, domain 1"/>
    <property type="match status" value="1"/>
</dbReference>
<dbReference type="Gene3D" id="3.40.640.10">
    <property type="entry name" value="Type I PLP-dependent aspartate aminotransferase-like (Major domain)"/>
    <property type="match status" value="1"/>
</dbReference>
<dbReference type="HAMAP" id="MF_01023">
    <property type="entry name" value="HisC_aminotrans_2"/>
    <property type="match status" value="1"/>
</dbReference>
<dbReference type="InterPro" id="IPR001917">
    <property type="entry name" value="Aminotrans_II_pyridoxalP_BS"/>
</dbReference>
<dbReference type="InterPro" id="IPR004839">
    <property type="entry name" value="Aminotransferase_I/II_large"/>
</dbReference>
<dbReference type="InterPro" id="IPR005861">
    <property type="entry name" value="HisP_aminotrans"/>
</dbReference>
<dbReference type="InterPro" id="IPR015424">
    <property type="entry name" value="PyrdxlP-dep_Trfase"/>
</dbReference>
<dbReference type="InterPro" id="IPR015421">
    <property type="entry name" value="PyrdxlP-dep_Trfase_major"/>
</dbReference>
<dbReference type="InterPro" id="IPR015422">
    <property type="entry name" value="PyrdxlP-dep_Trfase_small"/>
</dbReference>
<dbReference type="NCBIfam" id="TIGR01141">
    <property type="entry name" value="hisC"/>
    <property type="match status" value="1"/>
</dbReference>
<dbReference type="PANTHER" id="PTHR42885:SF2">
    <property type="entry name" value="HISTIDINOL-PHOSPHATE AMINOTRANSFERASE"/>
    <property type="match status" value="1"/>
</dbReference>
<dbReference type="PANTHER" id="PTHR42885">
    <property type="entry name" value="HISTIDINOL-PHOSPHATE AMINOTRANSFERASE-RELATED"/>
    <property type="match status" value="1"/>
</dbReference>
<dbReference type="Pfam" id="PF00155">
    <property type="entry name" value="Aminotran_1_2"/>
    <property type="match status" value="1"/>
</dbReference>
<dbReference type="SUPFAM" id="SSF53383">
    <property type="entry name" value="PLP-dependent transferases"/>
    <property type="match status" value="1"/>
</dbReference>
<dbReference type="PROSITE" id="PS00599">
    <property type="entry name" value="AA_TRANSFER_CLASS_2"/>
    <property type="match status" value="1"/>
</dbReference>
<accession>B7L9P8</accession>
<sequence length="356" mass="39374">MSTVTITDLARENVRNLTPYQSARRLGGNGDVWLNANEYPTAVEFQLTQQTLNRYPECQPKAVIENYAQYAGVKPEQVLVSRGADEGIELLIRAFCEPGKDAILYCPPTYGMYSVSAETIGVECRTVPTLENWQLDLQGISDKLDGVKVVYVCSPNNPTGQLINPQDFRTLLELTRGKAIVVADEAYIEFCPQASLAGWLAEYPHLAILRTLSKAFALAGLRCGFTLANEEVINLLMKVIAPYPLSTPVADIAAQALSPQGIVAMRERVAQIIAEREYLIAALKEIPCVEQVFDSETNYILARFKASSAVFKSLWDQGIILRDQNKQPSLSGCLRITVGTREESQRVIDALRAEQV</sequence>
<organism>
    <name type="scientific">Escherichia coli (strain 55989 / EAEC)</name>
    <dbReference type="NCBI Taxonomy" id="585055"/>
    <lineage>
        <taxon>Bacteria</taxon>
        <taxon>Pseudomonadati</taxon>
        <taxon>Pseudomonadota</taxon>
        <taxon>Gammaproteobacteria</taxon>
        <taxon>Enterobacterales</taxon>
        <taxon>Enterobacteriaceae</taxon>
        <taxon>Escherichia</taxon>
    </lineage>
</organism>
<keyword id="KW-0028">Amino-acid biosynthesis</keyword>
<keyword id="KW-0032">Aminotransferase</keyword>
<keyword id="KW-0368">Histidine biosynthesis</keyword>
<keyword id="KW-0663">Pyridoxal phosphate</keyword>
<keyword id="KW-1185">Reference proteome</keyword>
<keyword id="KW-0808">Transferase</keyword>
<protein>
    <recommendedName>
        <fullName evidence="1">Histidinol-phosphate aminotransferase</fullName>
        <ecNumber evidence="1">2.6.1.9</ecNumber>
    </recommendedName>
    <alternativeName>
        <fullName evidence="1">Imidazole acetol-phosphate transaminase</fullName>
    </alternativeName>
</protein>
<name>HIS8_ECO55</name>
<gene>
    <name evidence="1" type="primary">hisC</name>
    <name type="ordered locus">EC55989_2280</name>
</gene>
<reference key="1">
    <citation type="journal article" date="2009" name="PLoS Genet.">
        <title>Organised genome dynamics in the Escherichia coli species results in highly diverse adaptive paths.</title>
        <authorList>
            <person name="Touchon M."/>
            <person name="Hoede C."/>
            <person name="Tenaillon O."/>
            <person name="Barbe V."/>
            <person name="Baeriswyl S."/>
            <person name="Bidet P."/>
            <person name="Bingen E."/>
            <person name="Bonacorsi S."/>
            <person name="Bouchier C."/>
            <person name="Bouvet O."/>
            <person name="Calteau A."/>
            <person name="Chiapello H."/>
            <person name="Clermont O."/>
            <person name="Cruveiller S."/>
            <person name="Danchin A."/>
            <person name="Diard M."/>
            <person name="Dossat C."/>
            <person name="Karoui M.E."/>
            <person name="Frapy E."/>
            <person name="Garry L."/>
            <person name="Ghigo J.M."/>
            <person name="Gilles A.M."/>
            <person name="Johnson J."/>
            <person name="Le Bouguenec C."/>
            <person name="Lescat M."/>
            <person name="Mangenot S."/>
            <person name="Martinez-Jehanne V."/>
            <person name="Matic I."/>
            <person name="Nassif X."/>
            <person name="Oztas S."/>
            <person name="Petit M.A."/>
            <person name="Pichon C."/>
            <person name="Rouy Z."/>
            <person name="Ruf C.S."/>
            <person name="Schneider D."/>
            <person name="Tourret J."/>
            <person name="Vacherie B."/>
            <person name="Vallenet D."/>
            <person name="Medigue C."/>
            <person name="Rocha E.P.C."/>
            <person name="Denamur E."/>
        </authorList>
    </citation>
    <scope>NUCLEOTIDE SEQUENCE [LARGE SCALE GENOMIC DNA]</scope>
    <source>
        <strain>55989 / EAEC</strain>
    </source>
</reference>
<proteinExistence type="inferred from homology"/>
<feature type="chain" id="PRO_1000149095" description="Histidinol-phosphate aminotransferase">
    <location>
        <begin position="1"/>
        <end position="356"/>
    </location>
</feature>
<feature type="modified residue" description="N6-(pyridoxal phosphate)lysine" evidence="1">
    <location>
        <position position="214"/>
    </location>
</feature>
<evidence type="ECO:0000255" key="1">
    <source>
        <dbReference type="HAMAP-Rule" id="MF_01023"/>
    </source>
</evidence>
<comment type="catalytic activity">
    <reaction evidence="1">
        <text>L-histidinol phosphate + 2-oxoglutarate = 3-(imidazol-4-yl)-2-oxopropyl phosphate + L-glutamate</text>
        <dbReference type="Rhea" id="RHEA:23744"/>
        <dbReference type="ChEBI" id="CHEBI:16810"/>
        <dbReference type="ChEBI" id="CHEBI:29985"/>
        <dbReference type="ChEBI" id="CHEBI:57766"/>
        <dbReference type="ChEBI" id="CHEBI:57980"/>
        <dbReference type="EC" id="2.6.1.9"/>
    </reaction>
</comment>
<comment type="cofactor">
    <cofactor evidence="1">
        <name>pyridoxal 5'-phosphate</name>
        <dbReference type="ChEBI" id="CHEBI:597326"/>
    </cofactor>
</comment>
<comment type="pathway">
    <text evidence="1">Amino-acid biosynthesis; L-histidine biosynthesis; L-histidine from 5-phospho-alpha-D-ribose 1-diphosphate: step 7/9.</text>
</comment>
<comment type="subunit">
    <text evidence="1">Homodimer.</text>
</comment>
<comment type="similarity">
    <text evidence="1">Belongs to the class-II pyridoxal-phosphate-dependent aminotransferase family. Histidinol-phosphate aminotransferase subfamily.</text>
</comment>